<dbReference type="EMBL" id="CU928162">
    <property type="protein sequence ID" value="CAR06883.1"/>
    <property type="molecule type" value="Genomic_DNA"/>
</dbReference>
<dbReference type="RefSeq" id="WP_000741118.1">
    <property type="nucleotide sequence ID" value="NC_011745.1"/>
</dbReference>
<dbReference type="SMR" id="B7MPK1"/>
<dbReference type="KEGG" id="ecq:ECED1_0677"/>
<dbReference type="HOGENOM" id="CLU_018614_3_0_6"/>
<dbReference type="Proteomes" id="UP000000748">
    <property type="component" value="Chromosome"/>
</dbReference>
<dbReference type="GO" id="GO:0005886">
    <property type="term" value="C:plasma membrane"/>
    <property type="evidence" value="ECO:0007669"/>
    <property type="project" value="UniProtKB-SubCell"/>
</dbReference>
<dbReference type="GO" id="GO:0008556">
    <property type="term" value="F:P-type potassium transmembrane transporter activity"/>
    <property type="evidence" value="ECO:0007669"/>
    <property type="project" value="InterPro"/>
</dbReference>
<dbReference type="GO" id="GO:0030955">
    <property type="term" value="F:potassium ion binding"/>
    <property type="evidence" value="ECO:0007669"/>
    <property type="project" value="UniProtKB-UniRule"/>
</dbReference>
<dbReference type="HAMAP" id="MF_00275">
    <property type="entry name" value="KdpA"/>
    <property type="match status" value="1"/>
</dbReference>
<dbReference type="InterPro" id="IPR004623">
    <property type="entry name" value="KdpA"/>
</dbReference>
<dbReference type="NCBIfam" id="TIGR00680">
    <property type="entry name" value="kdpA"/>
    <property type="match status" value="1"/>
</dbReference>
<dbReference type="PANTHER" id="PTHR30607">
    <property type="entry name" value="POTASSIUM-TRANSPORTING ATPASE A CHAIN"/>
    <property type="match status" value="1"/>
</dbReference>
<dbReference type="PANTHER" id="PTHR30607:SF2">
    <property type="entry name" value="POTASSIUM-TRANSPORTING ATPASE POTASSIUM-BINDING SUBUNIT"/>
    <property type="match status" value="1"/>
</dbReference>
<dbReference type="Pfam" id="PF03814">
    <property type="entry name" value="KdpA"/>
    <property type="match status" value="1"/>
</dbReference>
<dbReference type="PIRSF" id="PIRSF001294">
    <property type="entry name" value="K_ATPaseA"/>
    <property type="match status" value="1"/>
</dbReference>
<evidence type="ECO:0000255" key="1">
    <source>
        <dbReference type="HAMAP-Rule" id="MF_00275"/>
    </source>
</evidence>
<feature type="chain" id="PRO_1000190737" description="Potassium-transporting ATPase potassium-binding subunit">
    <location>
        <begin position="1"/>
        <end position="557"/>
    </location>
</feature>
<feature type="transmembrane region" description="Helical" evidence="1">
    <location>
        <begin position="5"/>
        <end position="25"/>
    </location>
</feature>
<feature type="transmembrane region" description="Helical" evidence="1">
    <location>
        <begin position="63"/>
        <end position="83"/>
    </location>
</feature>
<feature type="transmembrane region" description="Helical" evidence="1">
    <location>
        <begin position="132"/>
        <end position="152"/>
    </location>
</feature>
<feature type="transmembrane region" description="Helical" evidence="1">
    <location>
        <begin position="170"/>
        <end position="190"/>
    </location>
</feature>
<feature type="transmembrane region" description="Helical" evidence="1">
    <location>
        <begin position="253"/>
        <end position="273"/>
    </location>
</feature>
<feature type="transmembrane region" description="Helical" evidence="1">
    <location>
        <begin position="283"/>
        <end position="303"/>
    </location>
</feature>
<feature type="transmembrane region" description="Helical" evidence="1">
    <location>
        <begin position="329"/>
        <end position="349"/>
    </location>
</feature>
<feature type="transmembrane region" description="Helical" evidence="1">
    <location>
        <begin position="356"/>
        <end position="376"/>
    </location>
</feature>
<feature type="transmembrane region" description="Helical" evidence="1">
    <location>
        <begin position="379"/>
        <end position="399"/>
    </location>
</feature>
<feature type="transmembrane region" description="Helical" evidence="1">
    <location>
        <begin position="416"/>
        <end position="436"/>
    </location>
</feature>
<feature type="transmembrane region" description="Helical" evidence="1">
    <location>
        <begin position="484"/>
        <end position="504"/>
    </location>
</feature>
<feature type="transmembrane region" description="Helical" evidence="1">
    <location>
        <begin position="526"/>
        <end position="546"/>
    </location>
</feature>
<proteinExistence type="inferred from homology"/>
<protein>
    <recommendedName>
        <fullName evidence="1">Potassium-transporting ATPase potassium-binding subunit</fullName>
    </recommendedName>
    <alternativeName>
        <fullName evidence="1">ATP phosphohydrolase [potassium-transporting] A chain</fullName>
    </alternativeName>
    <alternativeName>
        <fullName evidence="1">Potassium-binding and translocating subunit A</fullName>
    </alternativeName>
    <alternativeName>
        <fullName evidence="1">Potassium-translocating ATPase A chain</fullName>
    </alternativeName>
</protein>
<reference key="1">
    <citation type="journal article" date="2009" name="PLoS Genet.">
        <title>Organised genome dynamics in the Escherichia coli species results in highly diverse adaptive paths.</title>
        <authorList>
            <person name="Touchon M."/>
            <person name="Hoede C."/>
            <person name="Tenaillon O."/>
            <person name="Barbe V."/>
            <person name="Baeriswyl S."/>
            <person name="Bidet P."/>
            <person name="Bingen E."/>
            <person name="Bonacorsi S."/>
            <person name="Bouchier C."/>
            <person name="Bouvet O."/>
            <person name="Calteau A."/>
            <person name="Chiapello H."/>
            <person name="Clermont O."/>
            <person name="Cruveiller S."/>
            <person name="Danchin A."/>
            <person name="Diard M."/>
            <person name="Dossat C."/>
            <person name="Karoui M.E."/>
            <person name="Frapy E."/>
            <person name="Garry L."/>
            <person name="Ghigo J.M."/>
            <person name="Gilles A.M."/>
            <person name="Johnson J."/>
            <person name="Le Bouguenec C."/>
            <person name="Lescat M."/>
            <person name="Mangenot S."/>
            <person name="Martinez-Jehanne V."/>
            <person name="Matic I."/>
            <person name="Nassif X."/>
            <person name="Oztas S."/>
            <person name="Petit M.A."/>
            <person name="Pichon C."/>
            <person name="Rouy Z."/>
            <person name="Ruf C.S."/>
            <person name="Schneider D."/>
            <person name="Tourret J."/>
            <person name="Vacherie B."/>
            <person name="Vallenet D."/>
            <person name="Medigue C."/>
            <person name="Rocha E.P.C."/>
            <person name="Denamur E."/>
        </authorList>
    </citation>
    <scope>NUCLEOTIDE SEQUENCE [LARGE SCALE GENOMIC DNA]</scope>
    <source>
        <strain>ED1a</strain>
    </source>
</reference>
<comment type="function">
    <text evidence="1">Part of the high-affinity ATP-driven potassium transport (or Kdp) system, which catalyzes the hydrolysis of ATP coupled with the electrogenic transport of potassium into the cytoplasm. This subunit binds the periplasmic potassium ions and delivers the ions to the membrane domain of KdpB through an intramembrane tunnel.</text>
</comment>
<comment type="subunit">
    <text evidence="1">The system is composed of three essential subunits: KdpA, KdpB and KdpC.</text>
</comment>
<comment type="subcellular location">
    <subcellularLocation>
        <location evidence="1">Cell inner membrane</location>
        <topology evidence="1">Multi-pass membrane protein</topology>
    </subcellularLocation>
</comment>
<comment type="similarity">
    <text evidence="1">Belongs to the KdpA family.</text>
</comment>
<keyword id="KW-0997">Cell inner membrane</keyword>
<keyword id="KW-1003">Cell membrane</keyword>
<keyword id="KW-0406">Ion transport</keyword>
<keyword id="KW-0472">Membrane</keyword>
<keyword id="KW-0630">Potassium</keyword>
<keyword id="KW-0633">Potassium transport</keyword>
<keyword id="KW-0812">Transmembrane</keyword>
<keyword id="KW-1133">Transmembrane helix</keyword>
<keyword id="KW-0813">Transport</keyword>
<name>KDPA_ECO81</name>
<organism>
    <name type="scientific">Escherichia coli O81 (strain ED1a)</name>
    <dbReference type="NCBI Taxonomy" id="585397"/>
    <lineage>
        <taxon>Bacteria</taxon>
        <taxon>Pseudomonadati</taxon>
        <taxon>Pseudomonadota</taxon>
        <taxon>Gammaproteobacteria</taxon>
        <taxon>Enterobacterales</taxon>
        <taxon>Enterobacteriaceae</taxon>
        <taxon>Escherichia</taxon>
    </lineage>
</organism>
<sequence length="557" mass="59079">MAAQGFLLIATFLLVLMVLARPLGSGLARLINDIPLPGTAGVERVLFRLPGVSDSEMNWKQYLCAILGLNMLGLAVLFFMLLGQHYLPLNPQQLPGLSWDLALNTAVSFVTNTNWQSYSGETTLSYFSQMAGLTVQNFLSAASGIAVIFALIRAFTRQSMSTLGNAWVDLLRITLWVLAPVALLIALFFIQQGALQNFLPYQAVTTIEGSQQLLPMGPVASQEAIKMLGTNGGGFFNANSSHPFENPTALTNFVQMLAIFLIPTALCFAFGEVAGDRRQGRMLLWAMSVIFVICVGVVMWAEVQGNPHLLALGADSSINMEGKESRFGVLVSSLFAVVTTAASCGAVIAMHDSFTALGGMVPMWLMQIGEVVFGGVGSGLYGMMLFVLLAVFIAGLMIGRTPEYLGKKIDVREMKLTALAILVTPTLVLMGAALAMMTDAERSAMLNPGPHGFSEVLYAVSSAANNNGSAFAGLSANSPFWNCLLALCMFVGRFGVIIPVMAIAGSLVSKKSQPASSGTLPTHGPLFVGLLIGTVLLVGALTFIPALALGPVAEYLS</sequence>
<accession>B7MPK1</accession>
<gene>
    <name evidence="1" type="primary">kdpA</name>
    <name type="ordered locus">ECED1_0677</name>
</gene>